<name>Y873_PECAS</name>
<reference key="1">
    <citation type="journal article" date="2004" name="Proc. Natl. Acad. Sci. U.S.A.">
        <title>Genome sequence of the enterobacterial phytopathogen Erwinia carotovora subsp. atroseptica and characterization of virulence factors.</title>
        <authorList>
            <person name="Bell K.S."/>
            <person name="Sebaihia M."/>
            <person name="Pritchard L."/>
            <person name="Holden M.T.G."/>
            <person name="Hyman L.J."/>
            <person name="Holeva M.C."/>
            <person name="Thomson N.R."/>
            <person name="Bentley S.D."/>
            <person name="Churcher L.J.C."/>
            <person name="Mungall K."/>
            <person name="Atkin R."/>
            <person name="Bason N."/>
            <person name="Brooks K."/>
            <person name="Chillingworth T."/>
            <person name="Clark K."/>
            <person name="Doggett J."/>
            <person name="Fraser A."/>
            <person name="Hance Z."/>
            <person name="Hauser H."/>
            <person name="Jagels K."/>
            <person name="Moule S."/>
            <person name="Norbertczak H."/>
            <person name="Ormond D."/>
            <person name="Price C."/>
            <person name="Quail M.A."/>
            <person name="Sanders M."/>
            <person name="Walker D."/>
            <person name="Whitehead S."/>
            <person name="Salmond G.P.C."/>
            <person name="Birch P.R.J."/>
            <person name="Parkhill J."/>
            <person name="Toth I.K."/>
        </authorList>
    </citation>
    <scope>NUCLEOTIDE SEQUENCE [LARGE SCALE GENOMIC DNA]</scope>
    <source>
        <strain>SCRI 1043 / ATCC BAA-672</strain>
    </source>
</reference>
<feature type="chain" id="PRO_0000175978" description="UPF0178 protein ECA0873">
    <location>
        <begin position="1"/>
        <end position="150"/>
    </location>
</feature>
<evidence type="ECO:0000255" key="1">
    <source>
        <dbReference type="HAMAP-Rule" id="MF_00489"/>
    </source>
</evidence>
<proteinExistence type="inferred from homology"/>
<dbReference type="EMBL" id="BX950851">
    <property type="protein sequence ID" value="CAG73785.1"/>
    <property type="molecule type" value="Genomic_DNA"/>
</dbReference>
<dbReference type="RefSeq" id="WP_011092476.1">
    <property type="nucleotide sequence ID" value="NC_004547.2"/>
</dbReference>
<dbReference type="STRING" id="218491.ECA0873"/>
<dbReference type="DNASU" id="2885155"/>
<dbReference type="KEGG" id="eca:ECA0873"/>
<dbReference type="PATRIC" id="fig|218491.5.peg.875"/>
<dbReference type="eggNOG" id="COG1671">
    <property type="taxonomic scope" value="Bacteria"/>
</dbReference>
<dbReference type="HOGENOM" id="CLU_106619_1_0_6"/>
<dbReference type="OrthoDB" id="9798918at2"/>
<dbReference type="Proteomes" id="UP000007966">
    <property type="component" value="Chromosome"/>
</dbReference>
<dbReference type="CDD" id="cd18720">
    <property type="entry name" value="PIN_YqxD-like"/>
    <property type="match status" value="1"/>
</dbReference>
<dbReference type="HAMAP" id="MF_00489">
    <property type="entry name" value="UPF0178"/>
    <property type="match status" value="1"/>
</dbReference>
<dbReference type="InterPro" id="IPR003791">
    <property type="entry name" value="UPF0178"/>
</dbReference>
<dbReference type="NCBIfam" id="NF001095">
    <property type="entry name" value="PRK00124.1"/>
    <property type="match status" value="1"/>
</dbReference>
<dbReference type="PANTHER" id="PTHR35146">
    <property type="entry name" value="UPF0178 PROTEIN YAII"/>
    <property type="match status" value="1"/>
</dbReference>
<dbReference type="PANTHER" id="PTHR35146:SF1">
    <property type="entry name" value="UPF0178 PROTEIN YAII"/>
    <property type="match status" value="1"/>
</dbReference>
<dbReference type="Pfam" id="PF02639">
    <property type="entry name" value="DUF188"/>
    <property type="match status" value="1"/>
</dbReference>
<protein>
    <recommendedName>
        <fullName evidence="1">UPF0178 protein ECA0873</fullName>
    </recommendedName>
</protein>
<comment type="similarity">
    <text evidence="1">Belongs to the UPF0178 family.</text>
</comment>
<organism>
    <name type="scientific">Pectobacterium atrosepticum (strain SCRI 1043 / ATCC BAA-672)</name>
    <name type="common">Erwinia carotovora subsp. atroseptica</name>
    <dbReference type="NCBI Taxonomy" id="218491"/>
    <lineage>
        <taxon>Bacteria</taxon>
        <taxon>Pseudomonadati</taxon>
        <taxon>Pseudomonadota</taxon>
        <taxon>Gammaproteobacteria</taxon>
        <taxon>Enterobacterales</taxon>
        <taxon>Pectobacteriaceae</taxon>
        <taxon>Pectobacterium</taxon>
    </lineage>
</organism>
<gene>
    <name type="ordered locus">ECA0873</name>
</gene>
<accession>Q6D8U9</accession>
<sequence>MQIWVDADACPNVIKEVLFRAADRTQMQVTLVANQTIKVPPSRFISTLRVAAGFDVADNEIVRSVESGDLVITADIPLASEVIEKGGIALNPRGERYTPDTIRERLNMRDFMDTMRASGIQTGGPSTLNQRDRQQFANELDKWLQQVRKS</sequence>
<keyword id="KW-1185">Reference proteome</keyword>